<keyword id="KW-0378">Hydrolase</keyword>
<keyword id="KW-1185">Reference proteome</keyword>
<name>RPPH_WOLTR</name>
<reference key="1">
    <citation type="journal article" date="2005" name="PLoS Biol.">
        <title>The Wolbachia genome of Brugia malayi: endosymbiont evolution within a human pathogenic nematode.</title>
        <authorList>
            <person name="Foster J."/>
            <person name="Ganatra M."/>
            <person name="Kamal I."/>
            <person name="Ware J."/>
            <person name="Makarova K."/>
            <person name="Ivanova N."/>
            <person name="Bhattacharyya A."/>
            <person name="Kapatral V."/>
            <person name="Kumar S."/>
            <person name="Posfai J."/>
            <person name="Vincze T."/>
            <person name="Ingram J."/>
            <person name="Moran L."/>
            <person name="Lapidus A."/>
            <person name="Omelchenko M."/>
            <person name="Kyrpides N."/>
            <person name="Ghedin E."/>
            <person name="Wang S."/>
            <person name="Goltsman E."/>
            <person name="Joukov V."/>
            <person name="Ostrovskaya O."/>
            <person name="Tsukerman K."/>
            <person name="Mazur M."/>
            <person name="Comb D."/>
            <person name="Koonin E."/>
            <person name="Slatko B."/>
        </authorList>
    </citation>
    <scope>NUCLEOTIDE SEQUENCE [LARGE SCALE GENOMIC DNA]</scope>
    <source>
        <strain>TRS</strain>
    </source>
</reference>
<organism>
    <name type="scientific">Wolbachia sp. subsp. Brugia malayi (strain TRS)</name>
    <dbReference type="NCBI Taxonomy" id="292805"/>
    <lineage>
        <taxon>Bacteria</taxon>
        <taxon>Pseudomonadati</taxon>
        <taxon>Pseudomonadota</taxon>
        <taxon>Alphaproteobacteria</taxon>
        <taxon>Rickettsiales</taxon>
        <taxon>Anaplasmataceae</taxon>
        <taxon>Wolbachieae</taxon>
        <taxon>Wolbachia</taxon>
    </lineage>
</organism>
<evidence type="ECO:0000255" key="1">
    <source>
        <dbReference type="HAMAP-Rule" id="MF_00298"/>
    </source>
</evidence>
<feature type="chain" id="PRO_0000231943" description="RNA pyrophosphohydrolase">
    <location>
        <begin position="1"/>
        <end position="161"/>
    </location>
</feature>
<feature type="domain" description="Nudix hydrolase" evidence="1">
    <location>
        <begin position="7"/>
        <end position="149"/>
    </location>
</feature>
<feature type="short sequence motif" description="Nudix box">
    <location>
        <begin position="40"/>
        <end position="61"/>
    </location>
</feature>
<accession>Q5GT39</accession>
<comment type="function">
    <text evidence="1">Accelerates the degradation of transcripts by removing pyrophosphate from the 5'-end of triphosphorylated RNA, leading to a more labile monophosphorylated state that can stimulate subsequent ribonuclease cleavage.</text>
</comment>
<comment type="cofactor">
    <cofactor evidence="1">
        <name>a divalent metal cation</name>
        <dbReference type="ChEBI" id="CHEBI:60240"/>
    </cofactor>
</comment>
<comment type="similarity">
    <text evidence="1">Belongs to the Nudix hydrolase family. RppH subfamily.</text>
</comment>
<sequence length="161" mass="18967">MVEQKDKYRPCVGIMLFNKQGHVFIGKRFDSDSYWQMPQGGIDDGEKLEQAALRELLEEVGTDKAKIIAKNKDWIYYNLPEEVIPTCWNGRYSGQKQRWFLMKFYGEGKDININYTDHPEFKEWRWQSVDNLVAGAIPFKKEVYKTVIEEFSSQIKVSIIK</sequence>
<gene>
    <name evidence="1" type="primary">rppH</name>
    <name evidence="1" type="synonym">nudH</name>
    <name type="ordered locus">Wbm0246</name>
</gene>
<proteinExistence type="inferred from homology"/>
<protein>
    <recommendedName>
        <fullName evidence="1">RNA pyrophosphohydrolase</fullName>
        <ecNumber evidence="1">3.6.1.-</ecNumber>
    </recommendedName>
    <alternativeName>
        <fullName evidence="1">(Di)nucleoside polyphosphate hydrolase</fullName>
    </alternativeName>
</protein>
<dbReference type="EC" id="3.6.1.-" evidence="1"/>
<dbReference type="EMBL" id="AE017321">
    <property type="protein sequence ID" value="AAW70835.1"/>
    <property type="molecule type" value="Genomic_DNA"/>
</dbReference>
<dbReference type="SMR" id="Q5GT39"/>
<dbReference type="STRING" id="292805.Wbm0246"/>
<dbReference type="KEGG" id="wbm:Wbm0246"/>
<dbReference type="eggNOG" id="COG0494">
    <property type="taxonomic scope" value="Bacteria"/>
</dbReference>
<dbReference type="HOGENOM" id="CLU_087195_3_0_5"/>
<dbReference type="Proteomes" id="UP000000534">
    <property type="component" value="Chromosome"/>
</dbReference>
<dbReference type="GO" id="GO:0034432">
    <property type="term" value="F:bis(5'-adenosyl)-pentaphosphatase activity"/>
    <property type="evidence" value="ECO:0007669"/>
    <property type="project" value="TreeGrafter"/>
</dbReference>
<dbReference type="GO" id="GO:0008893">
    <property type="term" value="F:guanosine-3',5'-bis(diphosphate) 3'-diphosphatase activity"/>
    <property type="evidence" value="ECO:0007669"/>
    <property type="project" value="TreeGrafter"/>
</dbReference>
<dbReference type="GO" id="GO:0006753">
    <property type="term" value="P:nucleoside phosphate metabolic process"/>
    <property type="evidence" value="ECO:0007669"/>
    <property type="project" value="TreeGrafter"/>
</dbReference>
<dbReference type="GO" id="GO:0019693">
    <property type="term" value="P:ribose phosphate metabolic process"/>
    <property type="evidence" value="ECO:0007669"/>
    <property type="project" value="TreeGrafter"/>
</dbReference>
<dbReference type="CDD" id="cd03671">
    <property type="entry name" value="NUDIX_Ap4A_hydrolase_plant_like"/>
    <property type="match status" value="1"/>
</dbReference>
<dbReference type="Gene3D" id="3.90.79.10">
    <property type="entry name" value="Nucleoside Triphosphate Pyrophosphohydrolase"/>
    <property type="match status" value="1"/>
</dbReference>
<dbReference type="HAMAP" id="MF_00298">
    <property type="entry name" value="Nudix_RppH"/>
    <property type="match status" value="1"/>
</dbReference>
<dbReference type="InterPro" id="IPR020476">
    <property type="entry name" value="Nudix_hydrolase"/>
</dbReference>
<dbReference type="InterPro" id="IPR015797">
    <property type="entry name" value="NUDIX_hydrolase-like_dom_sf"/>
</dbReference>
<dbReference type="InterPro" id="IPR020084">
    <property type="entry name" value="NUDIX_hydrolase_CS"/>
</dbReference>
<dbReference type="InterPro" id="IPR000086">
    <property type="entry name" value="NUDIX_hydrolase_dom"/>
</dbReference>
<dbReference type="InterPro" id="IPR022927">
    <property type="entry name" value="RppH"/>
</dbReference>
<dbReference type="NCBIfam" id="NF001936">
    <property type="entry name" value="PRK00714.1-3"/>
    <property type="match status" value="1"/>
</dbReference>
<dbReference type="NCBIfam" id="NF001937">
    <property type="entry name" value="PRK00714.1-4"/>
    <property type="match status" value="1"/>
</dbReference>
<dbReference type="NCBIfam" id="NF001938">
    <property type="entry name" value="PRK00714.1-5"/>
    <property type="match status" value="1"/>
</dbReference>
<dbReference type="PANTHER" id="PTHR11839:SF22">
    <property type="entry name" value="NUDIX HYDROLASE 26, CHLOROPLASTIC"/>
    <property type="match status" value="1"/>
</dbReference>
<dbReference type="PANTHER" id="PTHR11839">
    <property type="entry name" value="UDP/ADP-SUGAR PYROPHOSPHATASE"/>
    <property type="match status" value="1"/>
</dbReference>
<dbReference type="Pfam" id="PF00293">
    <property type="entry name" value="NUDIX"/>
    <property type="match status" value="1"/>
</dbReference>
<dbReference type="PRINTS" id="PR00502">
    <property type="entry name" value="NUDIXFAMILY"/>
</dbReference>
<dbReference type="SUPFAM" id="SSF55811">
    <property type="entry name" value="Nudix"/>
    <property type="match status" value="1"/>
</dbReference>
<dbReference type="PROSITE" id="PS51462">
    <property type="entry name" value="NUDIX"/>
    <property type="match status" value="1"/>
</dbReference>
<dbReference type="PROSITE" id="PS00893">
    <property type="entry name" value="NUDIX_BOX"/>
    <property type="match status" value="1"/>
</dbReference>